<evidence type="ECO:0000250" key="1"/>
<evidence type="ECO:0000250" key="2">
    <source>
        <dbReference type="UniProtKB" id="Q04894"/>
    </source>
</evidence>
<evidence type="ECO:0000269" key="3">
    <source>
    </source>
</evidence>
<evidence type="ECO:0000269" key="4">
    <source>
    </source>
</evidence>
<evidence type="ECO:0000305" key="5"/>
<evidence type="ECO:0007744" key="6">
    <source>
    </source>
</evidence>
<reference key="1">
    <citation type="journal article" date="1992" name="Nature">
        <title>The complete DNA sequence of yeast chromosome III.</title>
        <authorList>
            <person name="Oliver S.G."/>
            <person name="van der Aart Q.J.M."/>
            <person name="Agostoni-Carbone M.L."/>
            <person name="Aigle M."/>
            <person name="Alberghina L."/>
            <person name="Alexandraki D."/>
            <person name="Antoine G."/>
            <person name="Anwar R."/>
            <person name="Ballesta J.P.G."/>
            <person name="Benit P."/>
            <person name="Berben G."/>
            <person name="Bergantino E."/>
            <person name="Biteau N."/>
            <person name="Bolle P.-A."/>
            <person name="Bolotin-Fukuhara M."/>
            <person name="Brown A."/>
            <person name="Brown A.J.P."/>
            <person name="Buhler J.-M."/>
            <person name="Carcano C."/>
            <person name="Carignani G."/>
            <person name="Cederberg H."/>
            <person name="Chanet R."/>
            <person name="Contreras R."/>
            <person name="Crouzet M."/>
            <person name="Daignan-Fornier B."/>
            <person name="Defoor E."/>
            <person name="Delgado M.D."/>
            <person name="Demolder J."/>
            <person name="Doira C."/>
            <person name="Dubois E."/>
            <person name="Dujon B."/>
            <person name="Duesterhoeft A."/>
            <person name="Erdmann D."/>
            <person name="Esteban M."/>
            <person name="Fabre F."/>
            <person name="Fairhead C."/>
            <person name="Faye G."/>
            <person name="Feldmann H."/>
            <person name="Fiers W."/>
            <person name="Francingues-Gaillard M.-C."/>
            <person name="Franco L."/>
            <person name="Frontali L."/>
            <person name="Fukuhara H."/>
            <person name="Fuller L.J."/>
            <person name="Galland P."/>
            <person name="Gent M.E."/>
            <person name="Gigot D."/>
            <person name="Gilliquet V."/>
            <person name="Glansdorff N."/>
            <person name="Goffeau A."/>
            <person name="Grenson M."/>
            <person name="Grisanti P."/>
            <person name="Grivell L.A."/>
            <person name="de Haan M."/>
            <person name="Haasemann M."/>
            <person name="Hatat D."/>
            <person name="Hoenicka J."/>
            <person name="Hegemann J.H."/>
            <person name="Herbert C.J."/>
            <person name="Hilger F."/>
            <person name="Hohmann S."/>
            <person name="Hollenberg C.P."/>
            <person name="Huse K."/>
            <person name="Iborra F."/>
            <person name="Indge K.J."/>
            <person name="Isono K."/>
            <person name="Jacq C."/>
            <person name="Jacquet M."/>
            <person name="James C.M."/>
            <person name="Jauniaux J.-C."/>
            <person name="Jia Y."/>
            <person name="Jimenez A."/>
            <person name="Kelly A."/>
            <person name="Kleinhans U."/>
            <person name="Kreisl P."/>
            <person name="Lanfranchi G."/>
            <person name="Lewis C."/>
            <person name="van der Linden C.G."/>
            <person name="Lucchini G."/>
            <person name="Lutzenkirchen K."/>
            <person name="Maat M.J."/>
            <person name="Mallet L."/>
            <person name="Mannhaupt G."/>
            <person name="Martegani E."/>
            <person name="Mathieu A."/>
            <person name="Maurer C.T.C."/>
            <person name="McConnell D."/>
            <person name="McKee R.A."/>
            <person name="Messenguy F."/>
            <person name="Mewes H.-W."/>
            <person name="Molemans F."/>
            <person name="Montague M.A."/>
            <person name="Muzi Falconi M."/>
            <person name="Navas L."/>
            <person name="Newlon C.S."/>
            <person name="Noone D."/>
            <person name="Pallier C."/>
            <person name="Panzeri L."/>
            <person name="Pearson B.M."/>
            <person name="Perea J."/>
            <person name="Philippsen P."/>
            <person name="Pierard A."/>
            <person name="Planta R.J."/>
            <person name="Plevani P."/>
            <person name="Poetsch B."/>
            <person name="Pohl F.M."/>
            <person name="Purnelle B."/>
            <person name="Ramezani Rad M."/>
            <person name="Rasmussen S.W."/>
            <person name="Raynal A."/>
            <person name="Remacha M.A."/>
            <person name="Richterich P."/>
            <person name="Roberts A.B."/>
            <person name="Rodriguez F."/>
            <person name="Sanz E."/>
            <person name="Schaaff-Gerstenschlaeger I."/>
            <person name="Scherens B."/>
            <person name="Schweitzer B."/>
            <person name="Shu Y."/>
            <person name="Skala J."/>
            <person name="Slonimski P.P."/>
            <person name="Sor F."/>
            <person name="Soustelle C."/>
            <person name="Spiegelberg R."/>
            <person name="Stateva L.I."/>
            <person name="Steensma H.Y."/>
            <person name="Steiner S."/>
            <person name="Thierry A."/>
            <person name="Thireos G."/>
            <person name="Tzermia M."/>
            <person name="Urrestarazu L.A."/>
            <person name="Valle G."/>
            <person name="Vetter I."/>
            <person name="van Vliet-Reedijk J.C."/>
            <person name="Voet M."/>
            <person name="Volckaert G."/>
            <person name="Vreken P."/>
            <person name="Wang H."/>
            <person name="Warmington J.R."/>
            <person name="von Wettstein D."/>
            <person name="Wicksteed B.L."/>
            <person name="Wilson C."/>
            <person name="Wurst H."/>
            <person name="Xu G."/>
            <person name="Yoshikawa A."/>
            <person name="Zimmermann F.K."/>
            <person name="Sgouros J.G."/>
        </authorList>
    </citation>
    <scope>NUCLEOTIDE SEQUENCE [LARGE SCALE GENOMIC DNA]</scope>
    <source>
        <strain>ATCC 204508 / S288c</strain>
    </source>
</reference>
<reference key="2">
    <citation type="journal article" date="2014" name="G3 (Bethesda)">
        <title>The reference genome sequence of Saccharomyces cerevisiae: Then and now.</title>
        <authorList>
            <person name="Engel S.R."/>
            <person name="Dietrich F.S."/>
            <person name="Fisk D.G."/>
            <person name="Binkley G."/>
            <person name="Balakrishnan R."/>
            <person name="Costanzo M.C."/>
            <person name="Dwight S.S."/>
            <person name="Hitz B.C."/>
            <person name="Karra K."/>
            <person name="Nash R.S."/>
            <person name="Weng S."/>
            <person name="Wong E.D."/>
            <person name="Lloyd P."/>
            <person name="Skrzypek M.S."/>
            <person name="Miyasato S.R."/>
            <person name="Simison M."/>
            <person name="Cherry J.M."/>
        </authorList>
    </citation>
    <scope>GENOME REANNOTATION</scope>
    <source>
        <strain>ATCC 204508 / S288c</strain>
    </source>
</reference>
<reference key="3">
    <citation type="journal article" date="2002" name="Eur. J. Biochem.">
        <title>Characterization of a Saccharomyces cerevisiae NADP(H)-dependent alcohol dehydrogenase (ADHVII), a member of the cinnamyl alcohol dehydrogenase family.</title>
        <authorList>
            <person name="Larroy C."/>
            <person name="Pares X."/>
            <person name="Biosca J.A."/>
        </authorList>
    </citation>
    <scope>FUNCTION</scope>
    <scope>CATALYTIC ACTIVITY</scope>
    <scope>BIOPHYSICOCHEMICAL PROPERTIES</scope>
    <scope>SUBUNIT</scope>
</reference>
<reference key="4">
    <citation type="journal article" date="2003" name="Nature">
        <title>Global analysis of protein expression in yeast.</title>
        <authorList>
            <person name="Ghaemmaghami S."/>
            <person name="Huh W.-K."/>
            <person name="Bower K."/>
            <person name="Howson R.W."/>
            <person name="Belle A."/>
            <person name="Dephoure N."/>
            <person name="O'Shea E.K."/>
            <person name="Weissman J.S."/>
        </authorList>
    </citation>
    <scope>LEVEL OF PROTEIN EXPRESSION [LARGE SCALE ANALYSIS]</scope>
</reference>
<reference key="5">
    <citation type="journal article" date="2007" name="Proc. Natl. Acad. Sci. U.S.A.">
        <title>Analysis of phosphorylation sites on proteins from Saccharomyces cerevisiae by electron transfer dissociation (ETD) mass spectrometry.</title>
        <authorList>
            <person name="Chi A."/>
            <person name="Huttenhower C."/>
            <person name="Geer L.Y."/>
            <person name="Coon J.J."/>
            <person name="Syka J.E.P."/>
            <person name="Bai D.L."/>
            <person name="Shabanowitz J."/>
            <person name="Burke D.J."/>
            <person name="Troyanskaya O.G."/>
            <person name="Hunt D.F."/>
        </authorList>
    </citation>
    <scope>PHOSPHORYLATION [LARGE SCALE ANALYSIS] AT SER-316</scope>
    <scope>IDENTIFICATION BY MASS SPECTROMETRY [LARGE SCALE ANALYSIS]</scope>
</reference>
<gene>
    <name type="primary">ADH7</name>
    <name type="ordered locus">YCR105W</name>
</gene>
<sequence length="361" mass="39348">MLYPEKFQGIGISNAKDWKHPKLVSFDPKPFGDHDVDVEIEACGICGSDFHIAVGNWGPVPENQILGHEIIGRVVKVGSKCHTGVKIGDRVGVGAQALACFECERCKSDNEQYCTNDHVLTMWTPYKDGYISQGGFASHVRLHEHFAIQIPENIPSPLAAPLLCGGITVFSPLLRNGCGPGKRVGIVGIGGIGHMGILLAKAMGAEVYAFSRGHSKREDSMKLGADHYIAMLEDKGWTEQYSNALDLLVVCSSSLSKVNFDSIVKIMKIGGSIVSIAAPEVNEKLVLKPLGLMGVSISSSAIGSRKEIEQLLKLVSEKNVKIWVEKLPISEEGVSHAFTRMESGDVKYRFTLVDYDKKFHK</sequence>
<organism>
    <name type="scientific">Saccharomyces cerevisiae (strain ATCC 204508 / S288c)</name>
    <name type="common">Baker's yeast</name>
    <dbReference type="NCBI Taxonomy" id="559292"/>
    <lineage>
        <taxon>Eukaryota</taxon>
        <taxon>Fungi</taxon>
        <taxon>Dikarya</taxon>
        <taxon>Ascomycota</taxon>
        <taxon>Saccharomycotina</taxon>
        <taxon>Saccharomycetes</taxon>
        <taxon>Saccharomycetales</taxon>
        <taxon>Saccharomycetaceae</taxon>
        <taxon>Saccharomyces</taxon>
    </lineage>
</organism>
<proteinExistence type="evidence at protein level"/>
<accession>P25377</accession>
<accession>D6VRA5</accession>
<comment type="function">
    <text evidence="3">NADP-dependent alcohol dehydrogenase with a broad substrate specificity. The oxidative reactions are more than 100 times less efficient than the corresponding reductions, suggesting that the enzyme acts as an aldehyde reductase, rather than as an alcohol dehydrogenase.</text>
</comment>
<comment type="catalytic activity">
    <reaction evidence="3">
        <text>a primary alcohol + NADP(+) = an aldehyde + NADPH + H(+)</text>
        <dbReference type="Rhea" id="RHEA:15937"/>
        <dbReference type="ChEBI" id="CHEBI:15378"/>
        <dbReference type="ChEBI" id="CHEBI:15734"/>
        <dbReference type="ChEBI" id="CHEBI:17478"/>
        <dbReference type="ChEBI" id="CHEBI:57783"/>
        <dbReference type="ChEBI" id="CHEBI:58349"/>
        <dbReference type="EC" id="1.1.1.2"/>
    </reaction>
    <physiologicalReaction direction="left-to-right" evidence="3">
        <dbReference type="Rhea" id="RHEA:15938"/>
    </physiologicalReaction>
    <physiologicalReaction direction="right-to-left" evidence="3">
        <dbReference type="Rhea" id="RHEA:15939"/>
    </physiologicalReaction>
</comment>
<comment type="catalytic activity">
    <reaction evidence="3">
        <text>(E)-cinnamyl alcohol + NADP(+) = (E)-cinnamaldehyde + NADPH + H(+)</text>
        <dbReference type="Rhea" id="RHEA:10392"/>
        <dbReference type="ChEBI" id="CHEBI:15378"/>
        <dbReference type="ChEBI" id="CHEBI:16731"/>
        <dbReference type="ChEBI" id="CHEBI:33227"/>
        <dbReference type="ChEBI" id="CHEBI:57783"/>
        <dbReference type="ChEBI" id="CHEBI:58349"/>
    </reaction>
    <physiologicalReaction direction="right-to-left" evidence="3">
        <dbReference type="Rhea" id="RHEA:10394"/>
    </physiologicalReaction>
</comment>
<comment type="catalytic activity">
    <reaction evidence="3">
        <text>3-methylbutanol + NADP(+) = 3-methylbutanal + NADPH + H(+)</text>
        <dbReference type="Rhea" id="RHEA:18525"/>
        <dbReference type="ChEBI" id="CHEBI:15378"/>
        <dbReference type="ChEBI" id="CHEBI:15837"/>
        <dbReference type="ChEBI" id="CHEBI:16638"/>
        <dbReference type="ChEBI" id="CHEBI:57783"/>
        <dbReference type="ChEBI" id="CHEBI:58349"/>
    </reaction>
    <physiologicalReaction direction="right-to-left" evidence="3">
        <dbReference type="Rhea" id="RHEA:18527"/>
    </physiologicalReaction>
</comment>
<comment type="cofactor">
    <cofactor evidence="1">
        <name>Zn(2+)</name>
        <dbReference type="ChEBI" id="CHEBI:29105"/>
    </cofactor>
    <text evidence="1">Binds 2 Zn(2+) ions per subunit.</text>
</comment>
<comment type="biophysicochemical properties">
    <kinetics>
        <KM evidence="3">0.043 mM for cinnamaldehyde</KM>
        <KM evidence="3">0.058 mM for veratraldehyde</KM>
        <KM evidence="3">0.049 mM for pentanal</KM>
        <KM evidence="3">0.048 mM for 3-methylbutanal</KM>
        <KM evidence="3">0.011 mM for NADPH</KM>
        <KM evidence="3">0.008 mM for cinnamyl alcohol</KM>
        <KM evidence="3">2.2 mM for phenylethanol</KM>
        <KM evidence="3">0.99 mM for pentanol</KM>
        <KM evidence="3">1.61 mM for 3-methylbutanol</KM>
        <KM evidence="3">0.013 mM for NADP</KM>
    </kinetics>
</comment>
<comment type="subunit">
    <text evidence="3">Homodimer.</text>
</comment>
<comment type="interaction">
    <interactant intactId="EBI-2347652">
        <id>P25377</id>
    </interactant>
    <interactant intactId="EBI-9886">
        <id>Q12265</id>
        <label>PRS5</label>
    </interactant>
    <organismsDiffer>false</organismsDiffer>
    <experiments>2</experiments>
</comment>
<comment type="miscellaneous">
    <text evidence="4">Present with 2870 molecules/cell in log phase SD medium.</text>
</comment>
<comment type="similarity">
    <text evidence="5">Belongs to the zinc-containing alcohol dehydrogenase family.</text>
</comment>
<name>ADH7_YEAST</name>
<keyword id="KW-0479">Metal-binding</keyword>
<keyword id="KW-0521">NADP</keyword>
<keyword id="KW-0560">Oxidoreductase</keyword>
<keyword id="KW-0597">Phosphoprotein</keyword>
<keyword id="KW-1185">Reference proteome</keyword>
<keyword id="KW-0862">Zinc</keyword>
<feature type="chain" id="PRO_0000160735" description="NADP-dependent alcohol dehydrogenase 7">
    <location>
        <begin position="1"/>
        <end position="361"/>
    </location>
</feature>
<feature type="binding site" evidence="2">
    <location>
        <position position="46"/>
    </location>
    <ligand>
        <name>Zn(2+)</name>
        <dbReference type="ChEBI" id="CHEBI:29105"/>
        <label>1</label>
        <note>catalytic</note>
    </ligand>
</feature>
<feature type="binding site" evidence="2">
    <location>
        <position position="47"/>
    </location>
    <ligand>
        <name>NADP(+)</name>
        <dbReference type="ChEBI" id="CHEBI:58349"/>
    </ligand>
</feature>
<feature type="binding site" evidence="2">
    <location>
        <position position="51"/>
    </location>
    <ligand>
        <name>NADP(+)</name>
        <dbReference type="ChEBI" id="CHEBI:58349"/>
    </ligand>
</feature>
<feature type="binding site" evidence="2">
    <location>
        <position position="68"/>
    </location>
    <ligand>
        <name>Zn(2+)</name>
        <dbReference type="ChEBI" id="CHEBI:29105"/>
        <label>1</label>
        <note>catalytic</note>
    </ligand>
</feature>
<feature type="binding site" evidence="2">
    <location>
        <position position="100"/>
    </location>
    <ligand>
        <name>Zn(2+)</name>
        <dbReference type="ChEBI" id="CHEBI:29105"/>
        <label>2</label>
    </ligand>
</feature>
<feature type="binding site" evidence="2">
    <location>
        <position position="103"/>
    </location>
    <ligand>
        <name>Zn(2+)</name>
        <dbReference type="ChEBI" id="CHEBI:29105"/>
        <label>2</label>
    </ligand>
</feature>
<feature type="binding site" evidence="2">
    <location>
        <position position="106"/>
    </location>
    <ligand>
        <name>Zn(2+)</name>
        <dbReference type="ChEBI" id="CHEBI:29105"/>
        <label>2</label>
    </ligand>
</feature>
<feature type="binding site" evidence="2">
    <location>
        <position position="114"/>
    </location>
    <ligand>
        <name>Zn(2+)</name>
        <dbReference type="ChEBI" id="CHEBI:29105"/>
        <label>2</label>
    </ligand>
</feature>
<feature type="binding site" evidence="2">
    <location>
        <position position="164"/>
    </location>
    <ligand>
        <name>Zn(2+)</name>
        <dbReference type="ChEBI" id="CHEBI:29105"/>
        <label>1</label>
        <note>catalytic</note>
    </ligand>
</feature>
<feature type="binding site" evidence="2">
    <location>
        <position position="189"/>
    </location>
    <ligand>
        <name>NADP(+)</name>
        <dbReference type="ChEBI" id="CHEBI:58349"/>
    </ligand>
</feature>
<feature type="binding site" evidence="2">
    <location>
        <position position="191"/>
    </location>
    <ligand>
        <name>NADP(+)</name>
        <dbReference type="ChEBI" id="CHEBI:58349"/>
    </ligand>
</feature>
<feature type="binding site" evidence="2">
    <location>
        <position position="192"/>
    </location>
    <ligand>
        <name>NADP(+)</name>
        <dbReference type="ChEBI" id="CHEBI:58349"/>
    </ligand>
</feature>
<feature type="binding site" evidence="2">
    <location>
        <position position="211"/>
    </location>
    <ligand>
        <name>NADP(+)</name>
        <dbReference type="ChEBI" id="CHEBI:58349"/>
    </ligand>
</feature>
<feature type="binding site" evidence="2">
    <location>
        <position position="212"/>
    </location>
    <ligand>
        <name>NADP(+)</name>
        <dbReference type="ChEBI" id="CHEBI:58349"/>
    </ligand>
</feature>
<feature type="binding site" evidence="2">
    <location>
        <position position="216"/>
    </location>
    <ligand>
        <name>NADP(+)</name>
        <dbReference type="ChEBI" id="CHEBI:58349"/>
    </ligand>
</feature>
<feature type="binding site" evidence="2">
    <location>
        <position position="251"/>
    </location>
    <ligand>
        <name>NADP(+)</name>
        <dbReference type="ChEBI" id="CHEBI:58349"/>
    </ligand>
</feature>
<feature type="binding site" evidence="2">
    <location>
        <position position="253"/>
    </location>
    <ligand>
        <name>NADP(+)</name>
        <dbReference type="ChEBI" id="CHEBI:58349"/>
    </ligand>
</feature>
<feature type="binding site" evidence="2">
    <location>
        <position position="256"/>
    </location>
    <ligand>
        <name>NADP(+)</name>
        <dbReference type="ChEBI" id="CHEBI:58349"/>
    </ligand>
</feature>
<feature type="binding site" evidence="2">
    <location>
        <position position="276"/>
    </location>
    <ligand>
        <name>NADP(+)</name>
        <dbReference type="ChEBI" id="CHEBI:58349"/>
    </ligand>
</feature>
<feature type="binding site" evidence="2">
    <location>
        <position position="300"/>
    </location>
    <ligand>
        <name>NADP(+)</name>
        <dbReference type="ChEBI" id="CHEBI:58349"/>
    </ligand>
</feature>
<feature type="binding site" evidence="2">
    <location>
        <position position="302"/>
    </location>
    <ligand>
        <name>NADP(+)</name>
        <dbReference type="ChEBI" id="CHEBI:58349"/>
    </ligand>
</feature>
<feature type="binding site" evidence="2">
    <location>
        <position position="349"/>
    </location>
    <ligand>
        <name>NADP(+)</name>
        <dbReference type="ChEBI" id="CHEBI:58349"/>
    </ligand>
</feature>
<feature type="modified residue" description="Phosphoserine" evidence="6">
    <location>
        <position position="316"/>
    </location>
</feature>
<dbReference type="EC" id="1.1.1.2" evidence="3"/>
<dbReference type="EMBL" id="X59720">
    <property type="protein sequence ID" value="CAA42237.1"/>
    <property type="molecule type" value="Genomic_DNA"/>
</dbReference>
<dbReference type="EMBL" id="BK006937">
    <property type="protein sequence ID" value="DAA07574.1"/>
    <property type="molecule type" value="Genomic_DNA"/>
</dbReference>
<dbReference type="PIR" id="S19417">
    <property type="entry name" value="S19417"/>
</dbReference>
<dbReference type="RefSeq" id="NP_010030.1">
    <property type="nucleotide sequence ID" value="NM_001178812.1"/>
</dbReference>
<dbReference type="SMR" id="P25377"/>
<dbReference type="BioGRID" id="31077">
    <property type="interactions" value="39"/>
</dbReference>
<dbReference type="DIP" id="DIP-7661N"/>
<dbReference type="FunCoup" id="P25377">
    <property type="interactions" value="725"/>
</dbReference>
<dbReference type="IntAct" id="P25377">
    <property type="interactions" value="2"/>
</dbReference>
<dbReference type="MINT" id="P25377"/>
<dbReference type="STRING" id="4932.YCR105W"/>
<dbReference type="iPTMnet" id="P25377"/>
<dbReference type="PaxDb" id="4932-YCR105W"/>
<dbReference type="PeptideAtlas" id="P25377"/>
<dbReference type="EnsemblFungi" id="YCR105W_mRNA">
    <property type="protein sequence ID" value="YCR105W"/>
    <property type="gene ID" value="YCR105W"/>
</dbReference>
<dbReference type="GeneID" id="850469"/>
<dbReference type="KEGG" id="sce:YCR105W"/>
<dbReference type="AGR" id="SGD:S000000702"/>
<dbReference type="SGD" id="S000000702">
    <property type="gene designation" value="ADH7"/>
</dbReference>
<dbReference type="VEuPathDB" id="FungiDB:YCR105W"/>
<dbReference type="eggNOG" id="KOG0023">
    <property type="taxonomic scope" value="Eukaryota"/>
</dbReference>
<dbReference type="GeneTree" id="ENSGT00940000176642"/>
<dbReference type="HOGENOM" id="CLU_026673_20_2_1"/>
<dbReference type="InParanoid" id="P25377"/>
<dbReference type="OMA" id="RNKAFGW"/>
<dbReference type="OrthoDB" id="1879366at2759"/>
<dbReference type="BioCyc" id="YEAST:YCR105W-MONOMER"/>
<dbReference type="BioGRID-ORCS" id="850469">
    <property type="hits" value="0 hits in 10 CRISPR screens"/>
</dbReference>
<dbReference type="PRO" id="PR:P25377"/>
<dbReference type="Proteomes" id="UP000002311">
    <property type="component" value="Chromosome III"/>
</dbReference>
<dbReference type="RNAct" id="P25377">
    <property type="molecule type" value="protein"/>
</dbReference>
<dbReference type="GO" id="GO:0052675">
    <property type="term" value="F:3-methylbutanal reductase (NADPH) activity"/>
    <property type="evidence" value="ECO:0007669"/>
    <property type="project" value="RHEA"/>
</dbReference>
<dbReference type="GO" id="GO:0008106">
    <property type="term" value="F:alcohol dehydrogenase (NADP+) activity"/>
    <property type="evidence" value="ECO:0000314"/>
    <property type="project" value="SGD"/>
</dbReference>
<dbReference type="GO" id="GO:0045551">
    <property type="term" value="F:cinnamyl-alcohol dehydrogenase activity"/>
    <property type="evidence" value="ECO:0007669"/>
    <property type="project" value="RHEA"/>
</dbReference>
<dbReference type="GO" id="GO:0008270">
    <property type="term" value="F:zinc ion binding"/>
    <property type="evidence" value="ECO:0007669"/>
    <property type="project" value="InterPro"/>
</dbReference>
<dbReference type="GO" id="GO:0006066">
    <property type="term" value="P:alcohol metabolic process"/>
    <property type="evidence" value="ECO:0000314"/>
    <property type="project" value="SGD"/>
</dbReference>
<dbReference type="CDD" id="cd05283">
    <property type="entry name" value="CAD1"/>
    <property type="match status" value="1"/>
</dbReference>
<dbReference type="FunFam" id="3.40.50.720:FF:000158">
    <property type="entry name" value="Zinc-binding alcohol dehydrogenase"/>
    <property type="match status" value="1"/>
</dbReference>
<dbReference type="Gene3D" id="3.90.180.10">
    <property type="entry name" value="Medium-chain alcohol dehydrogenases, catalytic domain"/>
    <property type="match status" value="1"/>
</dbReference>
<dbReference type="Gene3D" id="3.40.50.720">
    <property type="entry name" value="NAD(P)-binding Rossmann-like Domain"/>
    <property type="match status" value="1"/>
</dbReference>
<dbReference type="InterPro" id="IPR013149">
    <property type="entry name" value="ADH-like_C"/>
</dbReference>
<dbReference type="InterPro" id="IPR013154">
    <property type="entry name" value="ADH-like_N"/>
</dbReference>
<dbReference type="InterPro" id="IPR002328">
    <property type="entry name" value="ADH_Zn_CS"/>
</dbReference>
<dbReference type="InterPro" id="IPR047109">
    <property type="entry name" value="CAD-like"/>
</dbReference>
<dbReference type="InterPro" id="IPR029752">
    <property type="entry name" value="D-isomer_DH_CS1"/>
</dbReference>
<dbReference type="InterPro" id="IPR011032">
    <property type="entry name" value="GroES-like_sf"/>
</dbReference>
<dbReference type="InterPro" id="IPR036291">
    <property type="entry name" value="NAD(P)-bd_dom_sf"/>
</dbReference>
<dbReference type="InterPro" id="IPR020843">
    <property type="entry name" value="PKS_ER"/>
</dbReference>
<dbReference type="PANTHER" id="PTHR42683">
    <property type="entry name" value="ALDEHYDE REDUCTASE"/>
    <property type="match status" value="1"/>
</dbReference>
<dbReference type="Pfam" id="PF08240">
    <property type="entry name" value="ADH_N"/>
    <property type="match status" value="1"/>
</dbReference>
<dbReference type="Pfam" id="PF00107">
    <property type="entry name" value="ADH_zinc_N"/>
    <property type="match status" value="1"/>
</dbReference>
<dbReference type="SMART" id="SM00829">
    <property type="entry name" value="PKS_ER"/>
    <property type="match status" value="1"/>
</dbReference>
<dbReference type="SUPFAM" id="SSF50129">
    <property type="entry name" value="GroES-like"/>
    <property type="match status" value="1"/>
</dbReference>
<dbReference type="SUPFAM" id="SSF51735">
    <property type="entry name" value="NAD(P)-binding Rossmann-fold domains"/>
    <property type="match status" value="1"/>
</dbReference>
<dbReference type="PROSITE" id="PS00059">
    <property type="entry name" value="ADH_ZINC"/>
    <property type="match status" value="1"/>
</dbReference>
<protein>
    <recommendedName>
        <fullName>NADP-dependent alcohol dehydrogenase 7</fullName>
        <ecNumber evidence="3">1.1.1.2</ecNumber>
    </recommendedName>
    <alternativeName>
        <fullName>NADP-dependent alcohol dehydrogenase VII</fullName>
        <shortName>ADHVII</shortName>
    </alternativeName>
</protein>